<proteinExistence type="evidence at protein level"/>
<protein>
    <recommendedName>
        <fullName evidence="5">Isoflavone reductase-like protein</fullName>
    </recommendedName>
    <alternativeName>
        <fullName evidence="4">Pollen allergen Ole e 12</fullName>
    </alternativeName>
    <allergenName evidence="4">Ole e 12</allergenName>
</protein>
<keyword id="KW-0020">Allergen</keyword>
<keyword id="KW-0963">Cytoplasm</keyword>
<keyword id="KW-0521">NADP</keyword>
<keyword id="KW-0560">Oxidoreductase</keyword>
<feature type="chain" id="PRO_0000421084" description="Isoflavone reductase-like protein">
    <location>
        <begin position="1"/>
        <end position="308"/>
    </location>
</feature>
<feature type="active site" description="Proton acceptor" evidence="2">
    <location>
        <position position="133"/>
    </location>
</feature>
<feature type="binding site" evidence="2">
    <location>
        <begin position="11"/>
        <end position="17"/>
    </location>
    <ligand>
        <name>NADP(+)</name>
        <dbReference type="ChEBI" id="CHEBI:58349"/>
    </ligand>
</feature>
<feature type="binding site" evidence="2">
    <location>
        <position position="36"/>
    </location>
    <ligand>
        <name>NADP(+)</name>
        <dbReference type="ChEBI" id="CHEBI:58349"/>
    </ligand>
</feature>
<feature type="binding site" evidence="2">
    <location>
        <position position="45"/>
    </location>
    <ligand>
        <name>NADP(+)</name>
        <dbReference type="ChEBI" id="CHEBI:58349"/>
    </ligand>
</feature>
<feature type="binding site" evidence="2">
    <location>
        <position position="137"/>
    </location>
    <ligand>
        <name>NADP(+)</name>
        <dbReference type="ChEBI" id="CHEBI:58349"/>
    </ligand>
</feature>
<name>ALL12_OLEEU</name>
<dbReference type="EMBL" id="EU927297">
    <property type="protein sequence ID" value="ACL13551.1"/>
    <property type="molecule type" value="mRNA"/>
</dbReference>
<dbReference type="SMR" id="E1U332"/>
<dbReference type="Allergome" id="12134">
    <property type="allergen name" value="Ole e 12.0101"/>
</dbReference>
<dbReference type="Allergome" id="9073">
    <property type="allergen name" value="Ole e 12"/>
</dbReference>
<dbReference type="GO" id="GO:0005737">
    <property type="term" value="C:cytoplasm"/>
    <property type="evidence" value="ECO:0007669"/>
    <property type="project" value="UniProtKB-SubCell"/>
</dbReference>
<dbReference type="GO" id="GO:0016491">
    <property type="term" value="F:oxidoreductase activity"/>
    <property type="evidence" value="ECO:0007669"/>
    <property type="project" value="UniProtKB-KW"/>
</dbReference>
<dbReference type="CDD" id="cd05259">
    <property type="entry name" value="PCBER_SDR_a"/>
    <property type="match status" value="1"/>
</dbReference>
<dbReference type="Gene3D" id="3.40.50.720">
    <property type="entry name" value="NAD(P)-binding Rossmann-like Domain"/>
    <property type="match status" value="1"/>
</dbReference>
<dbReference type="Gene3D" id="3.90.25.10">
    <property type="entry name" value="UDP-galactose 4-epimerase, domain 1"/>
    <property type="match status" value="1"/>
</dbReference>
<dbReference type="InterPro" id="IPR036291">
    <property type="entry name" value="NAD(P)-bd_dom_sf"/>
</dbReference>
<dbReference type="InterPro" id="IPR008030">
    <property type="entry name" value="NmrA-like"/>
</dbReference>
<dbReference type="InterPro" id="IPR050608">
    <property type="entry name" value="NmrA-type/Isoflavone_red_sf"/>
</dbReference>
<dbReference type="InterPro" id="IPR045312">
    <property type="entry name" value="PCBER-like"/>
</dbReference>
<dbReference type="PANTHER" id="PTHR43349:SF93">
    <property type="entry name" value="ISOFLAVONE REDUCTASE HOMOLOG P3-RELATED"/>
    <property type="match status" value="1"/>
</dbReference>
<dbReference type="PANTHER" id="PTHR43349">
    <property type="entry name" value="PINORESINOL REDUCTASE-RELATED"/>
    <property type="match status" value="1"/>
</dbReference>
<dbReference type="Pfam" id="PF05368">
    <property type="entry name" value="NmrA"/>
    <property type="match status" value="1"/>
</dbReference>
<dbReference type="SUPFAM" id="SSF51735">
    <property type="entry name" value="NAD(P)-binding Rossmann-fold domains"/>
    <property type="match status" value="1"/>
</dbReference>
<reference key="1">
    <citation type="submission" date="2008-07" db="EMBL/GenBank/DDBJ databases">
        <title>Ole e 12, an allergen from olive pollen, is an isoflavone reductase.</title>
        <authorList>
            <person name="Castro L."/>
            <person name="Rodriguez R."/>
            <person name="Villalba M."/>
        </authorList>
    </citation>
    <scope>NUCLEOTIDE SEQUENCE [MRNA]</scope>
</reference>
<reference key="2">
    <citation type="journal article" date="2012" name="Talanta">
        <title>Analysis of olive allergens.</title>
        <authorList>
            <person name="Esteve C."/>
            <person name="Montealegre C."/>
            <person name="Marina M.L."/>
            <person name="Garcia M.C."/>
        </authorList>
    </citation>
    <scope>REVIEW</scope>
    <scope>NOMENCLATURE</scope>
</reference>
<reference key="3">
    <citation type="journal article" date="2013" name="J. Comput. Aided Mol. Des.">
        <title>Structural functionality, catalytic mechanism modeling and molecular allergenicity of phenylcoumaran benzylic ether reductase, an olive pollen (Ole e 12) allergen.</title>
        <authorList>
            <person name="Jimenez-Lopez J.C."/>
            <person name="Kotchoni S.O."/>
            <person name="Hernandez-Soriano M.C."/>
            <person name="Gachomo E.W."/>
            <person name="Alche J.D."/>
        </authorList>
    </citation>
    <scope>3D-STRUCTURE MODELING</scope>
    <scope>SUBUNIT</scope>
</reference>
<sequence length="308" mass="34068">MADKTKILIIGGTGYIGKFIVEASAKSEHPTFALARESTISDPVKGKIIQGFKNSGVTILTGDLYDHESLVKAIKQVDVVISTVGQLQLADQVKIIAAIKEAGNVKRFFPSDFGTDVDRCHAVEPAKSSFEIKSQIRRAIEAEGIPYTFVSANYFAGYSLPTLVQPEVTAPPRDKVIILGDGNAKAVFNEENDIGTYTIKAVDDARTLNKILYIKPPKNIYSFNELVALWEKKIGKTLEKIYVPEEQVLKQIQESPFPINIVMAINHSAFVKGDLTNFKIEPSFGVEASELYPDVKYTTVEEYLDQFV</sequence>
<evidence type="ECO:0000250" key="1"/>
<evidence type="ECO:0000250" key="2">
    <source>
        <dbReference type="UniProtKB" id="Q9LD14"/>
    </source>
</evidence>
<evidence type="ECO:0000269" key="3">
    <source>
    </source>
</evidence>
<evidence type="ECO:0000303" key="4">
    <source>
    </source>
</evidence>
<evidence type="ECO:0000305" key="5"/>
<evidence type="ECO:0000305" key="6">
    <source>
    </source>
</evidence>
<comment type="subunit">
    <text evidence="3">Homodimer.</text>
</comment>
<comment type="subcellular location">
    <subcellularLocation>
        <location evidence="1">Cytoplasm</location>
    </subcellularLocation>
</comment>
<comment type="allergen">
    <text evidence="5">Protein found in olive tree pollen that may cause an allergic reaction in human.</text>
</comment>
<comment type="miscellaneous">
    <text evidence="6">The catalytic tetrad is probably composed of Lys-133, Tyr-158, Ser-159 and Asn-153.</text>
</comment>
<comment type="similarity">
    <text evidence="5">Belongs to the NmrA-type oxidoreductase family. Isoflavone reductase subfamily.</text>
</comment>
<accession>E1U332</accession>
<organism>
    <name type="scientific">Olea europaea</name>
    <name type="common">Common olive</name>
    <dbReference type="NCBI Taxonomy" id="4146"/>
    <lineage>
        <taxon>Eukaryota</taxon>
        <taxon>Viridiplantae</taxon>
        <taxon>Streptophyta</taxon>
        <taxon>Embryophyta</taxon>
        <taxon>Tracheophyta</taxon>
        <taxon>Spermatophyta</taxon>
        <taxon>Magnoliopsida</taxon>
        <taxon>eudicotyledons</taxon>
        <taxon>Gunneridae</taxon>
        <taxon>Pentapetalae</taxon>
        <taxon>asterids</taxon>
        <taxon>lamiids</taxon>
        <taxon>Lamiales</taxon>
        <taxon>Oleaceae</taxon>
        <taxon>Oleeae</taxon>
        <taxon>Olea</taxon>
    </lineage>
</organism>